<comment type="function">
    <text evidence="1">Catalyzes the reversible interconversion of maltose and alpha,alpha-trehalose by transglucosylation.</text>
</comment>
<comment type="catalytic activity">
    <reaction evidence="1">
        <text>D-maltose = alpha,alpha-trehalose</text>
        <dbReference type="Rhea" id="RHEA:15145"/>
        <dbReference type="ChEBI" id="CHEBI:16551"/>
        <dbReference type="ChEBI" id="CHEBI:17306"/>
        <dbReference type="EC" id="5.4.99.16"/>
    </reaction>
</comment>
<comment type="similarity">
    <text evidence="3">Belongs to the glycosyl hydrolase 13 family. TreS subfamily.</text>
</comment>
<keyword id="KW-0106">Calcium</keyword>
<keyword id="KW-0413">Isomerase</keyword>
<keyword id="KW-0479">Metal-binding</keyword>
<name>TRES_THETH</name>
<evidence type="ECO:0000250" key="1">
    <source>
        <dbReference type="UniProtKB" id="A0R6E0"/>
    </source>
</evidence>
<evidence type="ECO:0000250" key="2">
    <source>
        <dbReference type="UniProtKB" id="Q9ZEU2"/>
    </source>
</evidence>
<evidence type="ECO:0000305" key="3"/>
<protein>
    <recommendedName>
        <fullName>Trehalose synthase</fullName>
        <ecNumber evidence="1">5.4.99.16</ecNumber>
    </recommendedName>
    <alternativeName>
        <fullName>Maltose alpha-D-glucosyltransferase</fullName>
    </alternativeName>
</protein>
<dbReference type="EC" id="5.4.99.16" evidence="1"/>
<dbReference type="EMBL" id="D86216">
    <property type="protein sequence ID" value="BAA19934.1"/>
    <property type="molecule type" value="Genomic_DNA"/>
</dbReference>
<dbReference type="SMR" id="O06458"/>
<dbReference type="CAZy" id="GH13">
    <property type="family name" value="Glycoside Hydrolase Family 13"/>
</dbReference>
<dbReference type="BRENDA" id="5.4.99.16">
    <property type="organism ID" value="2305"/>
</dbReference>
<dbReference type="GO" id="GO:0047471">
    <property type="term" value="F:maltose alpha-D-glucosyltransferase activity"/>
    <property type="evidence" value="ECO:0007669"/>
    <property type="project" value="UniProtKB-EC"/>
</dbReference>
<dbReference type="GO" id="GO:0046872">
    <property type="term" value="F:metal ion binding"/>
    <property type="evidence" value="ECO:0007669"/>
    <property type="project" value="UniProtKB-KW"/>
</dbReference>
<dbReference type="GO" id="GO:0005975">
    <property type="term" value="P:carbohydrate metabolic process"/>
    <property type="evidence" value="ECO:0007669"/>
    <property type="project" value="InterPro"/>
</dbReference>
<dbReference type="CDD" id="cd11334">
    <property type="entry name" value="AmyAc_TreS"/>
    <property type="match status" value="1"/>
</dbReference>
<dbReference type="FunFam" id="3.20.20.80:FF:000055">
    <property type="entry name" value="Trehalose synthase"/>
    <property type="match status" value="1"/>
</dbReference>
<dbReference type="Gene3D" id="3.20.20.80">
    <property type="entry name" value="Glycosidases"/>
    <property type="match status" value="1"/>
</dbReference>
<dbReference type="Gene3D" id="2.60.40.1180">
    <property type="entry name" value="Golgi alpha-mannosidase II"/>
    <property type="match status" value="1"/>
</dbReference>
<dbReference type="Gene3D" id="3.90.400.10">
    <property type="entry name" value="Oligo-1,6-glucosidase, Domain 2"/>
    <property type="match status" value="1"/>
</dbReference>
<dbReference type="InterPro" id="IPR006047">
    <property type="entry name" value="Glyco_hydro_13_cat_dom"/>
</dbReference>
<dbReference type="InterPro" id="IPR013780">
    <property type="entry name" value="Glyco_hydro_b"/>
</dbReference>
<dbReference type="InterPro" id="IPR017853">
    <property type="entry name" value="Glycoside_hydrolase_SF"/>
</dbReference>
<dbReference type="InterPro" id="IPR032091">
    <property type="entry name" value="Malt_amylase-like_C"/>
</dbReference>
<dbReference type="InterPro" id="IPR045857">
    <property type="entry name" value="O16G_dom_2"/>
</dbReference>
<dbReference type="InterPro" id="IPR012810">
    <property type="entry name" value="TreS/a-amylase_N"/>
</dbReference>
<dbReference type="NCBIfam" id="TIGR02456">
    <property type="entry name" value="treS_nterm"/>
    <property type="match status" value="1"/>
</dbReference>
<dbReference type="PANTHER" id="PTHR10357">
    <property type="entry name" value="ALPHA-AMYLASE FAMILY MEMBER"/>
    <property type="match status" value="1"/>
</dbReference>
<dbReference type="PANTHER" id="PTHR10357:SF219">
    <property type="entry name" value="MALTOSE ALPHA-D-GLUCOSYLTRANSFERASE"/>
    <property type="match status" value="1"/>
</dbReference>
<dbReference type="Pfam" id="PF00128">
    <property type="entry name" value="Alpha-amylase"/>
    <property type="match status" value="2"/>
</dbReference>
<dbReference type="Pfam" id="PF16657">
    <property type="entry name" value="Malt_amylase_C"/>
    <property type="match status" value="1"/>
</dbReference>
<dbReference type="SMART" id="SM00642">
    <property type="entry name" value="Aamy"/>
    <property type="match status" value="1"/>
</dbReference>
<dbReference type="SUPFAM" id="SSF51445">
    <property type="entry name" value="(Trans)glycosidases"/>
    <property type="match status" value="1"/>
</dbReference>
<dbReference type="SUPFAM" id="SSF51011">
    <property type="entry name" value="Glycosyl hydrolase domain"/>
    <property type="match status" value="1"/>
</dbReference>
<feature type="chain" id="PRO_0000054344" description="Trehalose synthase">
    <location>
        <begin position="1"/>
        <end position="963"/>
    </location>
</feature>
<feature type="active site" description="Nucleophile" evidence="1">
    <location>
        <position position="197"/>
    </location>
</feature>
<feature type="active site" description="Proton donor" evidence="2">
    <location>
        <position position="240"/>
    </location>
</feature>
<feature type="binding site" evidence="2">
    <location>
        <position position="60"/>
    </location>
    <ligand>
        <name>substrate</name>
    </ligand>
</feature>
<feature type="binding site" evidence="1">
    <location>
        <position position="100"/>
    </location>
    <ligand>
        <name>Ca(2+)</name>
        <dbReference type="ChEBI" id="CHEBI:29108"/>
    </ligand>
</feature>
<feature type="binding site" evidence="2">
    <location>
        <position position="101"/>
    </location>
    <ligand>
        <name>substrate</name>
    </ligand>
</feature>
<feature type="binding site" evidence="2">
    <location>
        <position position="165"/>
    </location>
    <ligand>
        <name>substrate</name>
    </ligand>
</feature>
<feature type="binding site" evidence="1">
    <location>
        <position position="167"/>
    </location>
    <ligand>
        <name>Ca(2+)</name>
        <dbReference type="ChEBI" id="CHEBI:29108"/>
    </ligand>
</feature>
<feature type="binding site" evidence="2">
    <location>
        <position position="195"/>
    </location>
    <ligand>
        <name>substrate</name>
    </ligand>
</feature>
<feature type="binding site" evidence="1">
    <location>
        <position position="201"/>
    </location>
    <ligand>
        <name>Ca(2+)</name>
        <dbReference type="ChEBI" id="CHEBI:29108"/>
    </ligand>
</feature>
<feature type="binding site" evidence="1">
    <location>
        <position position="202"/>
    </location>
    <ligand>
        <name>Ca(2+)</name>
        <dbReference type="ChEBI" id="CHEBI:29108"/>
    </ligand>
</feature>
<feature type="binding site" evidence="1">
    <location>
        <position position="204"/>
    </location>
    <ligand>
        <name>Ca(2+)</name>
        <dbReference type="ChEBI" id="CHEBI:29108"/>
    </ligand>
</feature>
<feature type="binding site" evidence="2">
    <location>
        <position position="305"/>
    </location>
    <ligand>
        <name>substrate</name>
    </ligand>
</feature>
<feature type="binding site" evidence="2">
    <location>
        <position position="306"/>
    </location>
    <ligand>
        <name>substrate</name>
    </ligand>
</feature>
<gene>
    <name type="primary">treS</name>
</gene>
<organism>
    <name type="scientific">Thermus thermophilus</name>
    <dbReference type="NCBI Taxonomy" id="274"/>
    <lineage>
        <taxon>Bacteria</taxon>
        <taxon>Thermotogati</taxon>
        <taxon>Deinococcota</taxon>
        <taxon>Deinococci</taxon>
        <taxon>Thermales</taxon>
        <taxon>Thermaceae</taxon>
        <taxon>Thermus</taxon>
    </lineage>
</organism>
<proteinExistence type="inferred from homology"/>
<sequence length="963" mass="110171">MDPLWYKDAVIYQLHVRSFFDANNDGYGDFEGLRRKLPYLEELGVNTLWLMPFFQSPLRDDGYDISDYYQILPVHGTLEDFTVDEAHGRGMKVIIELVLNHTSIDHPWFQEARKPNSPMRDWYVWSDTPEKYKGVRVIFKDFETSNWTFDPVAKAYYWHRFYWHQPDLNWDSPEVEKAIHQVMFFWADLGVDGFRLDAIPYLYEREGTSCENLPETIEAVKRLRKALEERYGPGKILLAEVNMWPEETLPYFGDGDGVHMAYNFPLMPRIFMALRREDRGPIETMLKEAEGIPETAQWALFLRNHDELTLEKVTEEEREFMYEAYAPDPKFRINLGIRRRLMPLLGGDRRRYELLTALLLTLKGTPIVYYGDEIGMGDNPFLGDRNGVRTPMQWSQDRIVAFSRAPYHALFLPPVSEGPYSYHFVNVEAQRENPHSLLSFNRRFLALRNQHAKIFGRGSLTLLPVENRRVLAYLREHEGERVLVVANLSRYTQAFDLPLEAYQGLVPVELFSQQPFPPVEGRYRLTLGPHGFALFALKPVEAVLHLPSPDWAEEPAPEEADLPRVHMPGGPEVLLVDTLVHERGREELLNALAQTLKEKSWLALKPQKVALLDALRFQKDPPLYLTLLQLENHRTLQVSLPLLWSPQRREGPGLFARTHGQPGYFYELSLDPGFYRLLLARLKEGFEGRSLRAYYRGRHPGPVPEAVDLLRPGLAAGEGVWVQLGLVQDGGLDRTERVLPRLDLPWVLRPEGGLFWERGASRRVLALTGSLPPGRPQDLFAALEVRLLESLPRLRGHAPGTPGLLPGALHETEALVRLLGVRLALLHRALGEVEGVVGGHPLLGRGLGAFLELEGEVYLVALGAEKRGTVEEDLARLAYDVERAVHLALEALEAELWAFAEEVADHLHAAFLQAYRSALPEEALEEAGWTRHMAEVAAEHLHREERPARKRIHERWQAKAGKA</sequence>
<reference key="1">
    <citation type="journal article" date="1997" name="Biochim. Biophys. Acta">
        <title>Cloning and sequencing of trehalose synthase gene from Thermus aquaticus ATCC33923.</title>
        <authorList>
            <person name="Tsusaki K."/>
            <person name="Nishimoto T."/>
            <person name="Nakada T."/>
            <person name="Kubota M."/>
            <person name="Chaen H."/>
            <person name="Fukuda S."/>
            <person name="Sugimoto T."/>
            <person name="Kurimoto M."/>
        </authorList>
    </citation>
    <scope>NUCLEOTIDE SEQUENCE [GENOMIC DNA]</scope>
    <source>
        <strain>ATCC 33923 / DSM 674 / AT-62</strain>
    </source>
</reference>
<accession>O06458</accession>